<accession>Q04594</accession>
<keyword id="KW-1015">Disulfide bond</keyword>
<keyword id="KW-0325">Glycoprotein</keyword>
<keyword id="KW-0472">Membrane</keyword>
<keyword id="KW-0479">Metal-binding</keyword>
<keyword id="KW-0675">Receptor</keyword>
<keyword id="KW-1185">Reference proteome</keyword>
<keyword id="KW-0677">Repeat</keyword>
<keyword id="KW-0732">Signal</keyword>
<keyword id="KW-0812">Transmembrane</keyword>
<keyword id="KW-1133">Transmembrane helix</keyword>
<keyword id="KW-0862">Zinc</keyword>
<protein>
    <recommendedName>
        <fullName>Prolactin receptor</fullName>
        <shortName>PRL-R</shortName>
        <shortName>cPRLR</shortName>
    </recommendedName>
</protein>
<feature type="signal peptide" evidence="2">
    <location>
        <begin position="1"/>
        <end position="23"/>
    </location>
</feature>
<feature type="chain" id="PRO_0000010984" description="Prolactin receptor">
    <location>
        <begin position="24"/>
        <end position="831"/>
    </location>
</feature>
<feature type="topological domain" description="Extracellular" evidence="2">
    <location>
        <begin position="24"/>
        <end position="438"/>
    </location>
</feature>
<feature type="transmembrane region" description="Helical" evidence="2">
    <location>
        <begin position="439"/>
        <end position="459"/>
    </location>
</feature>
<feature type="topological domain" description="Cytoplasmic" evidence="2">
    <location>
        <begin position="460"/>
        <end position="831"/>
    </location>
</feature>
<feature type="domain" description="Fibronectin type-III 1" evidence="3">
    <location>
        <begin position="30"/>
        <end position="128"/>
    </location>
</feature>
<feature type="domain" description="Fibronectin type-III 2" evidence="3">
    <location>
        <begin position="129"/>
        <end position="227"/>
    </location>
</feature>
<feature type="domain" description="Fibronectin type-III 3" evidence="3">
    <location>
        <begin position="230"/>
        <end position="331"/>
    </location>
</feature>
<feature type="domain" description="Fibronectin type-III 4" evidence="3">
    <location>
        <begin position="332"/>
        <end position="433"/>
    </location>
</feature>
<feature type="region of interest" description="Disordered" evidence="4">
    <location>
        <begin position="527"/>
        <end position="563"/>
    </location>
</feature>
<feature type="region of interest" description="Disordered" evidence="4">
    <location>
        <begin position="774"/>
        <end position="796"/>
    </location>
</feature>
<feature type="region of interest" description="Disordered" evidence="4">
    <location>
        <begin position="808"/>
        <end position="831"/>
    </location>
</feature>
<feature type="short sequence motif" description="WSXWS motif">
    <location>
        <begin position="419"/>
        <end position="423"/>
    </location>
</feature>
<feature type="short sequence motif" description="Box 1 motif">
    <location>
        <begin position="471"/>
        <end position="479"/>
    </location>
</feature>
<feature type="compositionally biased region" description="Polar residues" evidence="4">
    <location>
        <begin position="787"/>
        <end position="796"/>
    </location>
</feature>
<feature type="binding site" evidence="1">
    <location>
        <position position="414"/>
    </location>
    <ligand>
        <name>Zn(2+)</name>
        <dbReference type="ChEBI" id="CHEBI:29105"/>
    </ligand>
</feature>
<feature type="binding site" evidence="1">
    <location>
        <position position="416"/>
    </location>
    <ligand>
        <name>Zn(2+)</name>
        <dbReference type="ChEBI" id="CHEBI:29105"/>
    </ligand>
</feature>
<feature type="glycosylation site" description="N-linked (GlcNAc...) asparagine" evidence="2">
    <location>
        <position position="59"/>
    </location>
</feature>
<feature type="glycosylation site" description="N-linked (GlcNAc...) asparagine" evidence="2">
    <location>
        <position position="91"/>
    </location>
</feature>
<feature type="glycosylation site" description="N-linked (GlcNAc...) asparagine" evidence="2">
    <location>
        <position position="100"/>
    </location>
</feature>
<feature type="glycosylation site" description="N-linked (GlcNAc...) asparagine" evidence="2">
    <location>
        <position position="112"/>
    </location>
</feature>
<feature type="glycosylation site" description="N-linked (GlcNAc...) asparagine" evidence="2">
    <location>
        <position position="132"/>
    </location>
</feature>
<feature type="glycosylation site" description="N-linked (GlcNAc...) asparagine" evidence="2">
    <location>
        <position position="262"/>
    </location>
</feature>
<feature type="glycosylation site" description="N-linked (GlcNAc...) asparagine" evidence="2">
    <location>
        <position position="303"/>
    </location>
</feature>
<feature type="glycosylation site" description="N-linked (GlcNAc...) asparagine" evidence="2">
    <location>
        <position position="315"/>
    </location>
</feature>
<feature type="glycosylation site" description="N-linked (GlcNAc...) asparagine" evidence="2">
    <location>
        <position position="335"/>
    </location>
</feature>
<feature type="disulfide bond" evidence="1">
    <location>
        <begin position="36"/>
        <end position="46"/>
    </location>
</feature>
<feature type="disulfide bond" evidence="1">
    <location>
        <begin position="75"/>
        <end position="86"/>
    </location>
</feature>
<dbReference type="EMBL" id="D13154">
    <property type="protein sequence ID" value="BAA02439.1"/>
    <property type="molecule type" value="mRNA"/>
</dbReference>
<dbReference type="PIR" id="JQ1655">
    <property type="entry name" value="JQ1655"/>
</dbReference>
<dbReference type="RefSeq" id="NP_990185.1">
    <property type="nucleotide sequence ID" value="NM_204854.1"/>
</dbReference>
<dbReference type="SMR" id="Q04594"/>
<dbReference type="FunCoup" id="Q04594">
    <property type="interactions" value="25"/>
</dbReference>
<dbReference type="STRING" id="9031.ENSGALP00000073195"/>
<dbReference type="GlyCosmos" id="Q04594">
    <property type="glycosylation" value="9 sites, No reported glycans"/>
</dbReference>
<dbReference type="GlyGen" id="Q04594">
    <property type="glycosylation" value="9 sites"/>
</dbReference>
<dbReference type="PaxDb" id="9031-ENSGALP00000038374"/>
<dbReference type="GeneID" id="395660"/>
<dbReference type="KEGG" id="gga:395660"/>
<dbReference type="CTD" id="5618"/>
<dbReference type="VEuPathDB" id="HostDB:geneid_395660"/>
<dbReference type="eggNOG" id="ENOG502R22A">
    <property type="taxonomic scope" value="Eukaryota"/>
</dbReference>
<dbReference type="InParanoid" id="Q04594"/>
<dbReference type="OrthoDB" id="8858139at2759"/>
<dbReference type="PhylomeDB" id="Q04594"/>
<dbReference type="PRO" id="PR:Q04594"/>
<dbReference type="Proteomes" id="UP000000539">
    <property type="component" value="Unassembled WGS sequence"/>
</dbReference>
<dbReference type="GO" id="GO:0009897">
    <property type="term" value="C:external side of plasma membrane"/>
    <property type="evidence" value="ECO:0000318"/>
    <property type="project" value="GO_Central"/>
</dbReference>
<dbReference type="GO" id="GO:0005886">
    <property type="term" value="C:plasma membrane"/>
    <property type="evidence" value="ECO:0000304"/>
    <property type="project" value="AgBase"/>
</dbReference>
<dbReference type="GO" id="GO:0043235">
    <property type="term" value="C:receptor complex"/>
    <property type="evidence" value="ECO:0000318"/>
    <property type="project" value="GO_Central"/>
</dbReference>
<dbReference type="GO" id="GO:0019955">
    <property type="term" value="F:cytokine binding"/>
    <property type="evidence" value="ECO:0000318"/>
    <property type="project" value="GO_Central"/>
</dbReference>
<dbReference type="GO" id="GO:0046872">
    <property type="term" value="F:metal ion binding"/>
    <property type="evidence" value="ECO:0007669"/>
    <property type="project" value="UniProtKB-KW"/>
</dbReference>
<dbReference type="GO" id="GO:0017046">
    <property type="term" value="F:peptide hormone binding"/>
    <property type="evidence" value="ECO:0000318"/>
    <property type="project" value="GO_Central"/>
</dbReference>
<dbReference type="GO" id="GO:0004925">
    <property type="term" value="F:prolactin receptor activity"/>
    <property type="evidence" value="ECO:0000318"/>
    <property type="project" value="GO_Central"/>
</dbReference>
<dbReference type="GO" id="GO:0019221">
    <property type="term" value="P:cytokine-mediated signaling pathway"/>
    <property type="evidence" value="ECO:0000318"/>
    <property type="project" value="GO_Central"/>
</dbReference>
<dbReference type="GO" id="GO:0008284">
    <property type="term" value="P:positive regulation of cell population proliferation"/>
    <property type="evidence" value="ECO:0000318"/>
    <property type="project" value="GO_Central"/>
</dbReference>
<dbReference type="CDD" id="cd00063">
    <property type="entry name" value="FN3"/>
    <property type="match status" value="4"/>
</dbReference>
<dbReference type="FunFam" id="2.60.40.10:FF:000287">
    <property type="entry name" value="Prolactin receptor"/>
    <property type="match status" value="2"/>
</dbReference>
<dbReference type="FunFam" id="2.60.40.10:FF:000358">
    <property type="entry name" value="Prolactin receptor"/>
    <property type="match status" value="2"/>
</dbReference>
<dbReference type="Gene3D" id="2.60.40.10">
    <property type="entry name" value="Immunoglobulins"/>
    <property type="match status" value="4"/>
</dbReference>
<dbReference type="InterPro" id="IPR003961">
    <property type="entry name" value="FN3_dom"/>
</dbReference>
<dbReference type="InterPro" id="IPR036116">
    <property type="entry name" value="FN3_sf"/>
</dbReference>
<dbReference type="InterPro" id="IPR015152">
    <property type="entry name" value="Growth/epo_recpt_lig-bind"/>
</dbReference>
<dbReference type="InterPro" id="IPR013783">
    <property type="entry name" value="Ig-like_fold"/>
</dbReference>
<dbReference type="InterPro" id="IPR003528">
    <property type="entry name" value="Long_hematopoietin_rcpt_CS"/>
</dbReference>
<dbReference type="InterPro" id="IPR050379">
    <property type="entry name" value="Type-I_Cytokine_Rcpt"/>
</dbReference>
<dbReference type="PANTHER" id="PTHR23036">
    <property type="entry name" value="CYTOKINE RECEPTOR"/>
    <property type="match status" value="1"/>
</dbReference>
<dbReference type="PANTHER" id="PTHR23036:SF86">
    <property type="entry name" value="PROLACTIN RECEPTOR"/>
    <property type="match status" value="1"/>
</dbReference>
<dbReference type="Pfam" id="PF09067">
    <property type="entry name" value="EpoR_lig-bind"/>
    <property type="match status" value="2"/>
</dbReference>
<dbReference type="Pfam" id="PF00041">
    <property type="entry name" value="fn3"/>
    <property type="match status" value="1"/>
</dbReference>
<dbReference type="SMART" id="SM00060">
    <property type="entry name" value="FN3"/>
    <property type="match status" value="4"/>
</dbReference>
<dbReference type="SUPFAM" id="SSF49265">
    <property type="entry name" value="Fibronectin type III"/>
    <property type="match status" value="4"/>
</dbReference>
<dbReference type="PROSITE" id="PS50853">
    <property type="entry name" value="FN3"/>
    <property type="match status" value="4"/>
</dbReference>
<dbReference type="PROSITE" id="PS01352">
    <property type="entry name" value="HEMATOPO_REC_L_F1"/>
    <property type="match status" value="1"/>
</dbReference>
<reference key="1">
    <citation type="journal article" date="1992" name="Biochem. Biophys. Res. Commun.">
        <title>Double antenna structure of chicken prolactin receptor deduced from the cDNA sequence.</title>
        <authorList>
            <person name="Tanaka M."/>
            <person name="Maeda K."/>
            <person name="Okubo T."/>
            <person name="Nakashima K."/>
        </authorList>
    </citation>
    <scope>NUCLEOTIDE SEQUENCE [MRNA]</scope>
    <source>
        <strain>White leghorn</strain>
        <tissue>Kidney</tissue>
    </source>
</reference>
<proteinExistence type="evidence at transcript level"/>
<sequence>MKQDLISSVQIILFLPLTTVGLAGQSFPGKPKIIRCRSLEKETFSCWWKPGSDGGLPTNYTLFYSKDSEEEIYECPDYRTSGPNSCYFNKNHTSPWTTFNITVTATNEIGSNSSDPQYVDVTSIVQPGSPVNLTLETKRSANIMYLWAKWSPPLLADASSNHLYHYELRIKPEEKEEWETISVGVQTQCKINRLNAGMRYVVQVRCTLDPGEWSEWSSERHILIPSGQSPPEKPTIIKCRSPEKETFTCWWKPGLDGGHPTNYTLLYSKEGEEQVYECPDYRTAGPNSCYFDKKHTSFWTIYNITVRATNEMGSNSSDPHYVDVTYIVQPDPPVNVTLELKKPINRKPYLVLTWSPPPLADVRSGWLTLEYELRLKPEEGEEWETIFVGQQTQYKMFSLNPGKKYIIQIHCKPDHHGSWSEWSSENYIQIPNDFRVKDMIVWIVLGVLSSLICLIMSWTMVLKGYRMITFMLPPVPGPKIKGIDTHLLETGKSEELLSALGCHGLPPTSDCEELLIEYLEVEDSEDQQLMPSHDNGHPSKNAKITRKETDSDSGRGSCDSPSLLSEKCRETCALPPVLQTQEVRDVQEKKAAKRSWETQYVASERKALLSNSESAKSSTWPAVQLPNSQPPMFAYHSIVDAHKITLNTTNTNVAAVLVEDEEEHQSQCSLTETIPGEMEKQGEMENLHSKTEQTTAQVKQNRSNERLPFLDAALMDYVEVHKVIRQDEEPAVLLKHKENSGKIEKYTISGASKEYTKVSTVMDHNILVLMPDSRVPHTPASQEPAKETSQSLQQGQVEKNMSYCLTAPSDCKRETGGSEYMDPSSFMPSFK</sequence>
<gene>
    <name type="primary">PRLR</name>
</gene>
<organism>
    <name type="scientific">Gallus gallus</name>
    <name type="common">Chicken</name>
    <dbReference type="NCBI Taxonomy" id="9031"/>
    <lineage>
        <taxon>Eukaryota</taxon>
        <taxon>Metazoa</taxon>
        <taxon>Chordata</taxon>
        <taxon>Craniata</taxon>
        <taxon>Vertebrata</taxon>
        <taxon>Euteleostomi</taxon>
        <taxon>Archelosauria</taxon>
        <taxon>Archosauria</taxon>
        <taxon>Dinosauria</taxon>
        <taxon>Saurischia</taxon>
        <taxon>Theropoda</taxon>
        <taxon>Coelurosauria</taxon>
        <taxon>Aves</taxon>
        <taxon>Neognathae</taxon>
        <taxon>Galloanserae</taxon>
        <taxon>Galliformes</taxon>
        <taxon>Phasianidae</taxon>
        <taxon>Phasianinae</taxon>
        <taxon>Gallus</taxon>
    </lineage>
</organism>
<evidence type="ECO:0000250" key="1"/>
<evidence type="ECO:0000255" key="2"/>
<evidence type="ECO:0000255" key="3">
    <source>
        <dbReference type="PROSITE-ProRule" id="PRU00316"/>
    </source>
</evidence>
<evidence type="ECO:0000256" key="4">
    <source>
        <dbReference type="SAM" id="MobiDB-lite"/>
    </source>
</evidence>
<evidence type="ECO:0000305" key="5"/>
<comment type="function">
    <text>This is a receptor for the anterior pituitary hormone prolactin.</text>
</comment>
<comment type="subcellular location">
    <subcellularLocation>
        <location>Membrane</location>
        <topology>Single-pass type I membrane protein</topology>
    </subcellularLocation>
</comment>
<comment type="domain">
    <text>The WSXWS motif appears to be necessary for proper protein folding and thereby efficient intracellular transport and cell-surface receptor binding.</text>
</comment>
<comment type="domain">
    <text>The box 1 motif is required for JAK interaction and/or activation.</text>
</comment>
<comment type="similarity">
    <text evidence="5">Belongs to the type I cytokine receptor family. Type 1 subfamily.</text>
</comment>
<name>PRLR_CHICK</name>